<protein>
    <recommendedName>
        <fullName evidence="1">Glycine cleavage system H protein</fullName>
    </recommendedName>
</protein>
<gene>
    <name evidence="1" type="primary">gcvH</name>
    <name type="ordered locus">Mext_0854</name>
</gene>
<organism>
    <name type="scientific">Methylorubrum extorquens (strain PA1)</name>
    <name type="common">Methylobacterium extorquens</name>
    <dbReference type="NCBI Taxonomy" id="419610"/>
    <lineage>
        <taxon>Bacteria</taxon>
        <taxon>Pseudomonadati</taxon>
        <taxon>Pseudomonadota</taxon>
        <taxon>Alphaproteobacteria</taxon>
        <taxon>Hyphomicrobiales</taxon>
        <taxon>Methylobacteriaceae</taxon>
        <taxon>Methylorubrum</taxon>
    </lineage>
</organism>
<name>GCSH_METEP</name>
<proteinExistence type="inferred from homology"/>
<reference key="1">
    <citation type="submission" date="2007-12" db="EMBL/GenBank/DDBJ databases">
        <title>Complete sequence of Methylobacterium extorquens PA1.</title>
        <authorList>
            <consortium name="US DOE Joint Genome Institute"/>
            <person name="Copeland A."/>
            <person name="Lucas S."/>
            <person name="Lapidus A."/>
            <person name="Barry K."/>
            <person name="Glavina del Rio T."/>
            <person name="Dalin E."/>
            <person name="Tice H."/>
            <person name="Pitluck S."/>
            <person name="Saunders E."/>
            <person name="Brettin T."/>
            <person name="Bruce D."/>
            <person name="Detter J.C."/>
            <person name="Han C."/>
            <person name="Schmutz J."/>
            <person name="Larimer F."/>
            <person name="Land M."/>
            <person name="Hauser L."/>
            <person name="Kyrpides N."/>
            <person name="Kim E."/>
            <person name="Marx C."/>
            <person name="Richardson P."/>
        </authorList>
    </citation>
    <scope>NUCLEOTIDE SEQUENCE [LARGE SCALE GENOMIC DNA]</scope>
    <source>
        <strain>PA1</strain>
    </source>
</reference>
<evidence type="ECO:0000255" key="1">
    <source>
        <dbReference type="HAMAP-Rule" id="MF_00272"/>
    </source>
</evidence>
<evidence type="ECO:0000255" key="2">
    <source>
        <dbReference type="PROSITE-ProRule" id="PRU01066"/>
    </source>
</evidence>
<keyword id="KW-0450">Lipoyl</keyword>
<feature type="chain" id="PRO_1000114528" description="Glycine cleavage system H protein">
    <location>
        <begin position="1"/>
        <end position="120"/>
    </location>
</feature>
<feature type="domain" description="Lipoyl-binding" evidence="2">
    <location>
        <begin position="17"/>
        <end position="99"/>
    </location>
</feature>
<feature type="modified residue" description="N6-lipoyllysine" evidence="1">
    <location>
        <position position="58"/>
    </location>
</feature>
<sequence>MLRFTDEHEWLRLDGDVATVGITAHAAEQLGDLVFVELPKVGAKLTKGEAAAVVESVKAASDVYAPLSGEVTEVNEAAVADPASVGTDPQGDGWLYRLKLDDASAMDGLMDEAAYAAFAK</sequence>
<accession>A9W103</accession>
<dbReference type="EMBL" id="CP000908">
    <property type="protein sequence ID" value="ABY29259.1"/>
    <property type="molecule type" value="Genomic_DNA"/>
</dbReference>
<dbReference type="RefSeq" id="WP_012252575.1">
    <property type="nucleotide sequence ID" value="NC_010172.1"/>
</dbReference>
<dbReference type="SMR" id="A9W103"/>
<dbReference type="KEGG" id="mex:Mext_0854"/>
<dbReference type="eggNOG" id="COG0509">
    <property type="taxonomic scope" value="Bacteria"/>
</dbReference>
<dbReference type="HOGENOM" id="CLU_097408_2_2_5"/>
<dbReference type="BioCyc" id="MEXT419610:MEXT_RS04235-MONOMER"/>
<dbReference type="GO" id="GO:0005829">
    <property type="term" value="C:cytosol"/>
    <property type="evidence" value="ECO:0007669"/>
    <property type="project" value="TreeGrafter"/>
</dbReference>
<dbReference type="GO" id="GO:0005960">
    <property type="term" value="C:glycine cleavage complex"/>
    <property type="evidence" value="ECO:0007669"/>
    <property type="project" value="InterPro"/>
</dbReference>
<dbReference type="GO" id="GO:0019464">
    <property type="term" value="P:glycine decarboxylation via glycine cleavage system"/>
    <property type="evidence" value="ECO:0007669"/>
    <property type="project" value="UniProtKB-UniRule"/>
</dbReference>
<dbReference type="CDD" id="cd06848">
    <property type="entry name" value="GCS_H"/>
    <property type="match status" value="1"/>
</dbReference>
<dbReference type="Gene3D" id="2.40.50.100">
    <property type="match status" value="1"/>
</dbReference>
<dbReference type="HAMAP" id="MF_00272">
    <property type="entry name" value="GcvH"/>
    <property type="match status" value="1"/>
</dbReference>
<dbReference type="InterPro" id="IPR003016">
    <property type="entry name" value="2-oxoA_DH_lipoyl-BS"/>
</dbReference>
<dbReference type="InterPro" id="IPR000089">
    <property type="entry name" value="Biotin_lipoyl"/>
</dbReference>
<dbReference type="InterPro" id="IPR002930">
    <property type="entry name" value="GCV_H"/>
</dbReference>
<dbReference type="InterPro" id="IPR033753">
    <property type="entry name" value="GCV_H/Fam206"/>
</dbReference>
<dbReference type="InterPro" id="IPR017453">
    <property type="entry name" value="GCV_H_sub"/>
</dbReference>
<dbReference type="InterPro" id="IPR011053">
    <property type="entry name" value="Single_hybrid_motif"/>
</dbReference>
<dbReference type="NCBIfam" id="TIGR00527">
    <property type="entry name" value="gcvH"/>
    <property type="match status" value="1"/>
</dbReference>
<dbReference type="NCBIfam" id="NF002270">
    <property type="entry name" value="PRK01202.1"/>
    <property type="match status" value="1"/>
</dbReference>
<dbReference type="PANTHER" id="PTHR11715">
    <property type="entry name" value="GLYCINE CLEAVAGE SYSTEM H PROTEIN"/>
    <property type="match status" value="1"/>
</dbReference>
<dbReference type="PANTHER" id="PTHR11715:SF3">
    <property type="entry name" value="GLYCINE CLEAVAGE SYSTEM H PROTEIN-RELATED"/>
    <property type="match status" value="1"/>
</dbReference>
<dbReference type="Pfam" id="PF01597">
    <property type="entry name" value="GCV_H"/>
    <property type="match status" value="1"/>
</dbReference>
<dbReference type="SUPFAM" id="SSF51230">
    <property type="entry name" value="Single hybrid motif"/>
    <property type="match status" value="1"/>
</dbReference>
<dbReference type="PROSITE" id="PS50968">
    <property type="entry name" value="BIOTINYL_LIPOYL"/>
    <property type="match status" value="1"/>
</dbReference>
<dbReference type="PROSITE" id="PS00189">
    <property type="entry name" value="LIPOYL"/>
    <property type="match status" value="1"/>
</dbReference>
<comment type="function">
    <text evidence="1">The glycine cleavage system catalyzes the degradation of glycine. The H protein shuttles the methylamine group of glycine from the P protein to the T protein.</text>
</comment>
<comment type="cofactor">
    <cofactor evidence="1">
        <name>(R)-lipoate</name>
        <dbReference type="ChEBI" id="CHEBI:83088"/>
    </cofactor>
    <text evidence="1">Binds 1 lipoyl cofactor covalently.</text>
</comment>
<comment type="subunit">
    <text evidence="1">The glycine cleavage system is composed of four proteins: P, T, L and H.</text>
</comment>
<comment type="similarity">
    <text evidence="1">Belongs to the GcvH family.</text>
</comment>